<accession>B3R1Y0</accession>
<sequence length="266" mass="27851">MLKVEPIPAFQDNYIWAIHDGHCAAVVDPGEAAPVERFLAQSGLALGAIVITHHHGDHQGGVAGLLAAHPRAPSGGPLPVLGPAGERIGGRTQALREGDVATLEAPALTLRVLDVPGHTAGHIAYVADLGEAGPALFCGDTLFASGCGRLFEGTPAQMLASLDKLAALPGDTRVYCAHEYTRSNVRFARAVEPGNAALAAWEARVEALRATNQPTLPTTIAHERQVNPFLRSREPAVRAAVSAHGGTAADDAQNFGALRGWKDNFR</sequence>
<feature type="chain" id="PRO_1000144754" description="Hydroxyacylglutathione hydrolase">
    <location>
        <begin position="1"/>
        <end position="266"/>
    </location>
</feature>
<feature type="binding site" evidence="1">
    <location>
        <position position="53"/>
    </location>
    <ligand>
        <name>Zn(2+)</name>
        <dbReference type="ChEBI" id="CHEBI:29105"/>
        <label>1</label>
    </ligand>
</feature>
<feature type="binding site" evidence="1">
    <location>
        <position position="55"/>
    </location>
    <ligand>
        <name>Zn(2+)</name>
        <dbReference type="ChEBI" id="CHEBI:29105"/>
        <label>1</label>
    </ligand>
</feature>
<feature type="binding site" evidence="1">
    <location>
        <position position="57"/>
    </location>
    <ligand>
        <name>Zn(2+)</name>
        <dbReference type="ChEBI" id="CHEBI:29105"/>
        <label>2</label>
    </ligand>
</feature>
<feature type="binding site" evidence="1">
    <location>
        <position position="58"/>
    </location>
    <ligand>
        <name>Zn(2+)</name>
        <dbReference type="ChEBI" id="CHEBI:29105"/>
        <label>2</label>
    </ligand>
</feature>
<feature type="binding site" evidence="1">
    <location>
        <position position="118"/>
    </location>
    <ligand>
        <name>Zn(2+)</name>
        <dbReference type="ChEBI" id="CHEBI:29105"/>
        <label>1</label>
    </ligand>
</feature>
<feature type="binding site" evidence="1">
    <location>
        <position position="140"/>
    </location>
    <ligand>
        <name>Zn(2+)</name>
        <dbReference type="ChEBI" id="CHEBI:29105"/>
        <label>1</label>
    </ligand>
</feature>
<feature type="binding site" evidence="1">
    <location>
        <position position="140"/>
    </location>
    <ligand>
        <name>Zn(2+)</name>
        <dbReference type="ChEBI" id="CHEBI:29105"/>
        <label>2</label>
    </ligand>
</feature>
<feature type="binding site" evidence="1">
    <location>
        <position position="178"/>
    </location>
    <ligand>
        <name>Zn(2+)</name>
        <dbReference type="ChEBI" id="CHEBI:29105"/>
        <label>2</label>
    </ligand>
</feature>
<evidence type="ECO:0000255" key="1">
    <source>
        <dbReference type="HAMAP-Rule" id="MF_01374"/>
    </source>
</evidence>
<protein>
    <recommendedName>
        <fullName evidence="1">Hydroxyacylglutathione hydrolase</fullName>
        <ecNumber evidence="1">3.1.2.6</ecNumber>
    </recommendedName>
    <alternativeName>
        <fullName evidence="1">Glyoxalase II</fullName>
        <shortName evidence="1">Glx II</shortName>
    </alternativeName>
</protein>
<proteinExistence type="inferred from homology"/>
<keyword id="KW-0378">Hydrolase</keyword>
<keyword id="KW-0479">Metal-binding</keyword>
<keyword id="KW-0862">Zinc</keyword>
<comment type="function">
    <text evidence="1">Thiolesterase that catalyzes the hydrolysis of S-D-lactoyl-glutathione to form glutathione and D-lactic acid.</text>
</comment>
<comment type="catalytic activity">
    <reaction evidence="1">
        <text>an S-(2-hydroxyacyl)glutathione + H2O = a 2-hydroxy carboxylate + glutathione + H(+)</text>
        <dbReference type="Rhea" id="RHEA:21864"/>
        <dbReference type="ChEBI" id="CHEBI:15377"/>
        <dbReference type="ChEBI" id="CHEBI:15378"/>
        <dbReference type="ChEBI" id="CHEBI:57925"/>
        <dbReference type="ChEBI" id="CHEBI:58896"/>
        <dbReference type="ChEBI" id="CHEBI:71261"/>
        <dbReference type="EC" id="3.1.2.6"/>
    </reaction>
</comment>
<comment type="cofactor">
    <cofactor evidence="1">
        <name>Zn(2+)</name>
        <dbReference type="ChEBI" id="CHEBI:29105"/>
    </cofactor>
    <text evidence="1">Binds 2 Zn(2+) ions per subunit.</text>
</comment>
<comment type="pathway">
    <text evidence="1">Secondary metabolite metabolism; methylglyoxal degradation; (R)-lactate from methylglyoxal: step 2/2.</text>
</comment>
<comment type="subunit">
    <text evidence="1">Monomer.</text>
</comment>
<comment type="similarity">
    <text evidence="1">Belongs to the metallo-beta-lactamase superfamily. Glyoxalase II family.</text>
</comment>
<name>GLO2_CUPTR</name>
<reference key="1">
    <citation type="journal article" date="2008" name="Genome Res.">
        <title>Genome sequence of the beta-rhizobium Cupriavidus taiwanensis and comparative genomics of rhizobia.</title>
        <authorList>
            <person name="Amadou C."/>
            <person name="Pascal G."/>
            <person name="Mangenot S."/>
            <person name="Glew M."/>
            <person name="Bontemps C."/>
            <person name="Capela D."/>
            <person name="Carrere S."/>
            <person name="Cruveiller S."/>
            <person name="Dossat C."/>
            <person name="Lajus A."/>
            <person name="Marchetti M."/>
            <person name="Poinsot V."/>
            <person name="Rouy Z."/>
            <person name="Servin B."/>
            <person name="Saad M."/>
            <person name="Schenowitz C."/>
            <person name="Barbe V."/>
            <person name="Batut J."/>
            <person name="Medigue C."/>
            <person name="Masson-Boivin C."/>
        </authorList>
    </citation>
    <scope>NUCLEOTIDE SEQUENCE [LARGE SCALE GENOMIC DNA]</scope>
    <source>
        <strain>DSM 17343 / BCRC 17206 / CCUG 44338 / CIP 107171 / LMG 19424 / R1</strain>
    </source>
</reference>
<gene>
    <name evidence="1" type="primary">gloB</name>
    <name type="ordered locus">RALTA_A1995</name>
</gene>
<organism>
    <name type="scientific">Cupriavidus taiwanensis (strain DSM 17343 / BCRC 17206 / CCUG 44338 / CIP 107171 / LMG 19424 / R1)</name>
    <name type="common">Ralstonia taiwanensis (strain LMG 19424)</name>
    <dbReference type="NCBI Taxonomy" id="977880"/>
    <lineage>
        <taxon>Bacteria</taxon>
        <taxon>Pseudomonadati</taxon>
        <taxon>Pseudomonadota</taxon>
        <taxon>Betaproteobacteria</taxon>
        <taxon>Burkholderiales</taxon>
        <taxon>Burkholderiaceae</taxon>
        <taxon>Cupriavidus</taxon>
    </lineage>
</organism>
<dbReference type="EC" id="3.1.2.6" evidence="1"/>
<dbReference type="EMBL" id="CU633749">
    <property type="protein sequence ID" value="CAQ69936.1"/>
    <property type="molecule type" value="Genomic_DNA"/>
</dbReference>
<dbReference type="RefSeq" id="WP_012353246.1">
    <property type="nucleotide sequence ID" value="NC_010528.1"/>
</dbReference>
<dbReference type="SMR" id="B3R1Y0"/>
<dbReference type="GeneID" id="29761497"/>
<dbReference type="KEGG" id="cti:RALTA_A1995"/>
<dbReference type="eggNOG" id="COG0491">
    <property type="taxonomic scope" value="Bacteria"/>
</dbReference>
<dbReference type="HOGENOM" id="CLU_030571_4_1_4"/>
<dbReference type="BioCyc" id="CTAI977880:RALTA_RS09670-MONOMER"/>
<dbReference type="UniPathway" id="UPA00619">
    <property type="reaction ID" value="UER00676"/>
</dbReference>
<dbReference type="Proteomes" id="UP000001692">
    <property type="component" value="Chromosome 1"/>
</dbReference>
<dbReference type="GO" id="GO:0004416">
    <property type="term" value="F:hydroxyacylglutathione hydrolase activity"/>
    <property type="evidence" value="ECO:0007669"/>
    <property type="project" value="UniProtKB-UniRule"/>
</dbReference>
<dbReference type="GO" id="GO:0046872">
    <property type="term" value="F:metal ion binding"/>
    <property type="evidence" value="ECO:0007669"/>
    <property type="project" value="UniProtKB-KW"/>
</dbReference>
<dbReference type="GO" id="GO:0019243">
    <property type="term" value="P:methylglyoxal catabolic process to D-lactate via S-lactoyl-glutathione"/>
    <property type="evidence" value="ECO:0007669"/>
    <property type="project" value="InterPro"/>
</dbReference>
<dbReference type="CDD" id="cd07723">
    <property type="entry name" value="hydroxyacylglutathione_hydrolase_MBL-fold"/>
    <property type="match status" value="1"/>
</dbReference>
<dbReference type="Gene3D" id="3.60.15.10">
    <property type="entry name" value="Ribonuclease Z/Hydroxyacylglutathione hydrolase-like"/>
    <property type="match status" value="1"/>
</dbReference>
<dbReference type="HAMAP" id="MF_01374">
    <property type="entry name" value="Glyoxalase_2"/>
    <property type="match status" value="1"/>
</dbReference>
<dbReference type="InterPro" id="IPR035680">
    <property type="entry name" value="Clx_II_MBL"/>
</dbReference>
<dbReference type="InterPro" id="IPR050110">
    <property type="entry name" value="Glyoxalase_II_hydrolase"/>
</dbReference>
<dbReference type="InterPro" id="IPR032282">
    <property type="entry name" value="HAGH_C"/>
</dbReference>
<dbReference type="InterPro" id="IPR017782">
    <property type="entry name" value="Hydroxyacylglutathione_Hdrlase"/>
</dbReference>
<dbReference type="InterPro" id="IPR001279">
    <property type="entry name" value="Metallo-B-lactamas"/>
</dbReference>
<dbReference type="InterPro" id="IPR036866">
    <property type="entry name" value="RibonucZ/Hydroxyglut_hydro"/>
</dbReference>
<dbReference type="NCBIfam" id="TIGR03413">
    <property type="entry name" value="GSH_gloB"/>
    <property type="match status" value="1"/>
</dbReference>
<dbReference type="PANTHER" id="PTHR43705">
    <property type="entry name" value="HYDROXYACYLGLUTATHIONE HYDROLASE"/>
    <property type="match status" value="1"/>
</dbReference>
<dbReference type="PANTHER" id="PTHR43705:SF1">
    <property type="entry name" value="HYDROXYACYLGLUTATHIONE HYDROLASE GLOB"/>
    <property type="match status" value="1"/>
</dbReference>
<dbReference type="Pfam" id="PF16123">
    <property type="entry name" value="HAGH_C"/>
    <property type="match status" value="1"/>
</dbReference>
<dbReference type="Pfam" id="PF00753">
    <property type="entry name" value="Lactamase_B"/>
    <property type="match status" value="1"/>
</dbReference>
<dbReference type="PIRSF" id="PIRSF005457">
    <property type="entry name" value="Glx"/>
    <property type="match status" value="1"/>
</dbReference>
<dbReference type="SMART" id="SM00849">
    <property type="entry name" value="Lactamase_B"/>
    <property type="match status" value="1"/>
</dbReference>
<dbReference type="SUPFAM" id="SSF56281">
    <property type="entry name" value="Metallo-hydrolase/oxidoreductase"/>
    <property type="match status" value="1"/>
</dbReference>